<accession>Q9KUX3</accession>
<feature type="chain" id="PRO_0000199912" description="Sulfite reductase [NADPH] hemoprotein beta-component">
    <location>
        <begin position="1"/>
        <end position="577"/>
    </location>
</feature>
<feature type="binding site" evidence="1">
    <location>
        <position position="440"/>
    </location>
    <ligand>
        <name>[4Fe-4S] cluster</name>
        <dbReference type="ChEBI" id="CHEBI:49883"/>
    </ligand>
</feature>
<feature type="binding site" evidence="1">
    <location>
        <position position="446"/>
    </location>
    <ligand>
        <name>[4Fe-4S] cluster</name>
        <dbReference type="ChEBI" id="CHEBI:49883"/>
    </ligand>
</feature>
<feature type="binding site" evidence="1">
    <location>
        <position position="486"/>
    </location>
    <ligand>
        <name>[4Fe-4S] cluster</name>
        <dbReference type="ChEBI" id="CHEBI:49883"/>
    </ligand>
</feature>
<feature type="binding site" evidence="1">
    <location>
        <position position="490"/>
    </location>
    <ligand>
        <name>[4Fe-4S] cluster</name>
        <dbReference type="ChEBI" id="CHEBI:49883"/>
    </ligand>
</feature>
<feature type="binding site" description="axial binding residue" evidence="1">
    <location>
        <position position="490"/>
    </location>
    <ligand>
        <name>siroheme</name>
        <dbReference type="ChEBI" id="CHEBI:60052"/>
    </ligand>
    <ligandPart>
        <name>Fe</name>
        <dbReference type="ChEBI" id="CHEBI:18248"/>
    </ligandPart>
</feature>
<keyword id="KW-0004">4Fe-4S</keyword>
<keyword id="KW-0028">Amino-acid biosynthesis</keyword>
<keyword id="KW-0198">Cysteine biosynthesis</keyword>
<keyword id="KW-0349">Heme</keyword>
<keyword id="KW-0408">Iron</keyword>
<keyword id="KW-0411">Iron-sulfur</keyword>
<keyword id="KW-0479">Metal-binding</keyword>
<keyword id="KW-0521">NADP</keyword>
<keyword id="KW-0560">Oxidoreductase</keyword>
<keyword id="KW-1185">Reference proteome</keyword>
<dbReference type="EC" id="1.8.1.2" evidence="1"/>
<dbReference type="EMBL" id="AE003852">
    <property type="protein sequence ID" value="AAF93558.1"/>
    <property type="molecule type" value="Genomic_DNA"/>
</dbReference>
<dbReference type="PIR" id="C82329">
    <property type="entry name" value="C82329"/>
</dbReference>
<dbReference type="RefSeq" id="NP_230039.1">
    <property type="nucleotide sequence ID" value="NC_002505.1"/>
</dbReference>
<dbReference type="RefSeq" id="WP_001275671.1">
    <property type="nucleotide sequence ID" value="NZ_LT906614.1"/>
</dbReference>
<dbReference type="SMR" id="Q9KUX3"/>
<dbReference type="STRING" id="243277.VC_0385"/>
<dbReference type="DNASU" id="2615028"/>
<dbReference type="EnsemblBacteria" id="AAF93558">
    <property type="protein sequence ID" value="AAF93558"/>
    <property type="gene ID" value="VC_0385"/>
</dbReference>
<dbReference type="KEGG" id="vch:VC_0385"/>
<dbReference type="PATRIC" id="fig|243277.26.peg.361"/>
<dbReference type="eggNOG" id="COG0155">
    <property type="taxonomic scope" value="Bacteria"/>
</dbReference>
<dbReference type="HOGENOM" id="CLU_001975_3_2_6"/>
<dbReference type="UniPathway" id="UPA00140">
    <property type="reaction ID" value="UER00207"/>
</dbReference>
<dbReference type="Proteomes" id="UP000000584">
    <property type="component" value="Chromosome 1"/>
</dbReference>
<dbReference type="GO" id="GO:0009337">
    <property type="term" value="C:sulfite reductase complex (NADPH)"/>
    <property type="evidence" value="ECO:0000318"/>
    <property type="project" value="GO_Central"/>
</dbReference>
<dbReference type="GO" id="GO:0051539">
    <property type="term" value="F:4 iron, 4 sulfur cluster binding"/>
    <property type="evidence" value="ECO:0007669"/>
    <property type="project" value="UniProtKB-KW"/>
</dbReference>
<dbReference type="GO" id="GO:0020037">
    <property type="term" value="F:heme binding"/>
    <property type="evidence" value="ECO:0007669"/>
    <property type="project" value="InterPro"/>
</dbReference>
<dbReference type="GO" id="GO:0046872">
    <property type="term" value="F:metal ion binding"/>
    <property type="evidence" value="ECO:0007669"/>
    <property type="project" value="UniProtKB-KW"/>
</dbReference>
<dbReference type="GO" id="GO:0050661">
    <property type="term" value="F:NADP binding"/>
    <property type="evidence" value="ECO:0007669"/>
    <property type="project" value="InterPro"/>
</dbReference>
<dbReference type="GO" id="GO:0004783">
    <property type="term" value="F:sulfite reductase (NADPH) activity"/>
    <property type="evidence" value="ECO:0007669"/>
    <property type="project" value="UniProtKB-UniRule"/>
</dbReference>
<dbReference type="GO" id="GO:0019344">
    <property type="term" value="P:cysteine biosynthetic process"/>
    <property type="evidence" value="ECO:0007669"/>
    <property type="project" value="UniProtKB-KW"/>
</dbReference>
<dbReference type="GO" id="GO:0070814">
    <property type="term" value="P:hydrogen sulfide biosynthetic process"/>
    <property type="evidence" value="ECO:0007669"/>
    <property type="project" value="UniProtKB-UniRule"/>
</dbReference>
<dbReference type="GO" id="GO:0000103">
    <property type="term" value="P:sulfate assimilation"/>
    <property type="evidence" value="ECO:0000318"/>
    <property type="project" value="GO_Central"/>
</dbReference>
<dbReference type="FunFam" id="3.30.413.10:FF:000003">
    <property type="entry name" value="Sulfite reductase [NADPH] hemoprotein beta-component"/>
    <property type="match status" value="1"/>
</dbReference>
<dbReference type="FunFam" id="3.30.413.10:FF:000004">
    <property type="entry name" value="Sulfite reductase [NADPH] hemoprotein beta-component"/>
    <property type="match status" value="1"/>
</dbReference>
<dbReference type="Gene3D" id="3.30.413.10">
    <property type="entry name" value="Sulfite Reductase Hemoprotein, domain 1"/>
    <property type="match status" value="2"/>
</dbReference>
<dbReference type="HAMAP" id="MF_01540">
    <property type="entry name" value="CysI"/>
    <property type="match status" value="1"/>
</dbReference>
<dbReference type="InterPro" id="IPR011786">
    <property type="entry name" value="CysI"/>
</dbReference>
<dbReference type="InterPro" id="IPR005117">
    <property type="entry name" value="NiRdtase/SiRdtase_haem-b_fer"/>
</dbReference>
<dbReference type="InterPro" id="IPR036136">
    <property type="entry name" value="Nit/Sulf_reduc_fer-like_dom_sf"/>
</dbReference>
<dbReference type="InterPro" id="IPR006067">
    <property type="entry name" value="NO2/SO3_Rdtase_4Fe4S_dom"/>
</dbReference>
<dbReference type="InterPro" id="IPR045169">
    <property type="entry name" value="NO2/SO3_Rdtase_4Fe4S_prot"/>
</dbReference>
<dbReference type="InterPro" id="IPR045854">
    <property type="entry name" value="NO2/SO3_Rdtase_4Fe4S_sf"/>
</dbReference>
<dbReference type="InterPro" id="IPR006066">
    <property type="entry name" value="NO2/SO3_Rdtase_FeS/sirohaem_BS"/>
</dbReference>
<dbReference type="NCBIfam" id="TIGR02041">
    <property type="entry name" value="CysI"/>
    <property type="match status" value="1"/>
</dbReference>
<dbReference type="NCBIfam" id="NF010029">
    <property type="entry name" value="PRK13504.1"/>
    <property type="match status" value="1"/>
</dbReference>
<dbReference type="PANTHER" id="PTHR11493:SF47">
    <property type="entry name" value="SULFITE REDUCTASE [NADPH] SUBUNIT BETA"/>
    <property type="match status" value="1"/>
</dbReference>
<dbReference type="PANTHER" id="PTHR11493">
    <property type="entry name" value="SULFITE REDUCTASE [NADPH] SUBUNIT BETA-RELATED"/>
    <property type="match status" value="1"/>
</dbReference>
<dbReference type="Pfam" id="PF01077">
    <property type="entry name" value="NIR_SIR"/>
    <property type="match status" value="1"/>
</dbReference>
<dbReference type="Pfam" id="PF03460">
    <property type="entry name" value="NIR_SIR_ferr"/>
    <property type="match status" value="2"/>
</dbReference>
<dbReference type="PRINTS" id="PR00397">
    <property type="entry name" value="SIROHAEM"/>
</dbReference>
<dbReference type="SUPFAM" id="SSF56014">
    <property type="entry name" value="Nitrite and sulphite reductase 4Fe-4S domain-like"/>
    <property type="match status" value="2"/>
</dbReference>
<dbReference type="SUPFAM" id="SSF55124">
    <property type="entry name" value="Nitrite/Sulfite reductase N-terminal domain-like"/>
    <property type="match status" value="2"/>
</dbReference>
<dbReference type="PROSITE" id="PS00365">
    <property type="entry name" value="NIR_SIR"/>
    <property type="match status" value="1"/>
</dbReference>
<evidence type="ECO:0000255" key="1">
    <source>
        <dbReference type="HAMAP-Rule" id="MF_01540"/>
    </source>
</evidence>
<gene>
    <name evidence="1" type="primary">cysI</name>
    <name type="ordered locus">VC_0385</name>
</gene>
<comment type="function">
    <text evidence="1">Component of the sulfite reductase complex that catalyzes the 6-electron reduction of sulfite to sulfide. This is one of several activities required for the biosynthesis of L-cysteine from sulfate.</text>
</comment>
<comment type="catalytic activity">
    <reaction evidence="1">
        <text>hydrogen sulfide + 3 NADP(+) + 3 H2O = sulfite + 3 NADPH + 4 H(+)</text>
        <dbReference type="Rhea" id="RHEA:13801"/>
        <dbReference type="ChEBI" id="CHEBI:15377"/>
        <dbReference type="ChEBI" id="CHEBI:15378"/>
        <dbReference type="ChEBI" id="CHEBI:17359"/>
        <dbReference type="ChEBI" id="CHEBI:29919"/>
        <dbReference type="ChEBI" id="CHEBI:57783"/>
        <dbReference type="ChEBI" id="CHEBI:58349"/>
        <dbReference type="EC" id="1.8.1.2"/>
    </reaction>
</comment>
<comment type="cofactor">
    <cofactor evidence="1">
        <name>siroheme</name>
        <dbReference type="ChEBI" id="CHEBI:60052"/>
    </cofactor>
    <text evidence="1">Binds 1 siroheme per subunit.</text>
</comment>
<comment type="cofactor">
    <cofactor evidence="1">
        <name>[4Fe-4S] cluster</name>
        <dbReference type="ChEBI" id="CHEBI:49883"/>
    </cofactor>
    <text evidence="1">Binds 1 [4Fe-4S] cluster per subunit.</text>
</comment>
<comment type="pathway">
    <text evidence="1">Sulfur metabolism; hydrogen sulfide biosynthesis; hydrogen sulfide from sulfite (NADPH route): step 1/1.</text>
</comment>
<comment type="subunit">
    <text evidence="1">Alpha(8)-beta(8). The alpha component is a flavoprotein, the beta component is a hemoprotein.</text>
</comment>
<comment type="similarity">
    <text evidence="1">Belongs to the nitrite and sulfite reductase 4Fe-4S domain family.</text>
</comment>
<sequence>MSANQNPSVQEVLGEVLGPWSDNERLKRESHFLRGTIEQDLQDRITGGFTADNFQLIRFHGMYQQDDRDIRAERSKQKLEPLHNVMLRARMPGGIITPHQWLAIDKFATEHTLYGSIRLTTRQTFQFHGVLKPNIKLMHQTLNSIGIDSIATAGDVNRNVLCTSNPVESELHLQAYEWAKKISEHLLPKTRAYAEIWLDGEKIEGPDEEPILGSNYLPRKFKTTVVIPPHNDVDVHANDLNFVAIGENGQLVGFNVLVGGGLAMTHGDTSTYPRRADDFGFIPLEKTLEVAAAVVSTQRDWGNRSNRKNAKTKYTLDRVGVEVFKAEVEKRAGITFAPSRAYEFTSRGDRIGWVEGIDGKHHLTLFIENGRILDFPGKPLKTGVAEIAKVHQGDFRMTANQNLIVAGVPADQKPHIEQLAREHGLIDDGVSEQRINSMACVAFPTCPLAMAEAERFLPSFVTEVEGILAKHALPKEENIILRVTGCPNGCGRAMLAEIGLVGKAPGRYNLHLGGNRNGTRIPKMYKENITDTQILQEIDELVGRWASERLDGEGFGDFTIRAGIIEEVIISKRDFYA</sequence>
<proteinExistence type="inferred from homology"/>
<reference key="1">
    <citation type="journal article" date="2000" name="Nature">
        <title>DNA sequence of both chromosomes of the cholera pathogen Vibrio cholerae.</title>
        <authorList>
            <person name="Heidelberg J.F."/>
            <person name="Eisen J.A."/>
            <person name="Nelson W.C."/>
            <person name="Clayton R.A."/>
            <person name="Gwinn M.L."/>
            <person name="Dodson R.J."/>
            <person name="Haft D.H."/>
            <person name="Hickey E.K."/>
            <person name="Peterson J.D."/>
            <person name="Umayam L.A."/>
            <person name="Gill S.R."/>
            <person name="Nelson K.E."/>
            <person name="Read T.D."/>
            <person name="Tettelin H."/>
            <person name="Richardson D.L."/>
            <person name="Ermolaeva M.D."/>
            <person name="Vamathevan J.J."/>
            <person name="Bass S."/>
            <person name="Qin H."/>
            <person name="Dragoi I."/>
            <person name="Sellers P."/>
            <person name="McDonald L.A."/>
            <person name="Utterback T.R."/>
            <person name="Fleischmann R.D."/>
            <person name="Nierman W.C."/>
            <person name="White O."/>
            <person name="Salzberg S.L."/>
            <person name="Smith H.O."/>
            <person name="Colwell R.R."/>
            <person name="Mekalanos J.J."/>
            <person name="Venter J.C."/>
            <person name="Fraser C.M."/>
        </authorList>
    </citation>
    <scope>NUCLEOTIDE SEQUENCE [LARGE SCALE GENOMIC DNA]</scope>
    <source>
        <strain>ATCC 39315 / El Tor Inaba N16961</strain>
    </source>
</reference>
<organism>
    <name type="scientific">Vibrio cholerae serotype O1 (strain ATCC 39315 / El Tor Inaba N16961)</name>
    <dbReference type="NCBI Taxonomy" id="243277"/>
    <lineage>
        <taxon>Bacteria</taxon>
        <taxon>Pseudomonadati</taxon>
        <taxon>Pseudomonadota</taxon>
        <taxon>Gammaproteobacteria</taxon>
        <taxon>Vibrionales</taxon>
        <taxon>Vibrionaceae</taxon>
        <taxon>Vibrio</taxon>
    </lineage>
</organism>
<protein>
    <recommendedName>
        <fullName evidence="1">Sulfite reductase [NADPH] hemoprotein beta-component</fullName>
        <shortName evidence="1">SiR-HP</shortName>
        <shortName evidence="1">SiRHP</shortName>
        <ecNumber evidence="1">1.8.1.2</ecNumber>
    </recommendedName>
</protein>
<name>CYSI_VIBCH</name>